<organism>
    <name type="scientific">Escherichia coli O9:H4 (strain HS)</name>
    <dbReference type="NCBI Taxonomy" id="331112"/>
    <lineage>
        <taxon>Bacteria</taxon>
        <taxon>Pseudomonadati</taxon>
        <taxon>Pseudomonadota</taxon>
        <taxon>Gammaproteobacteria</taxon>
        <taxon>Enterobacterales</taxon>
        <taxon>Enterobacteriaceae</taxon>
        <taxon>Escherichia</taxon>
    </lineage>
</organism>
<sequence length="239" mass="27307">MKNDVISPEFDENGRPLRRIRSFVRRQGRLTKGQEHALENYWPVMGVEFSEDMLDFPALFGREAPVTLEIGFGMGASLVAMAKDRPEQDFLGIEVHSPGVGACLASAHEEGLSNLRVMCHDAVEVLHKMIPDNSLRMVQLFFPDPWHKARHNKRRIVQVPFAELVKSKLQLGGVFHMATDWEPYAEHMLEVMSSIDGYKNLSESNDYVPRPASRPVTKFEQRGHRLGHGVWDLMFERVK</sequence>
<feature type="chain" id="PRO_1000064392" description="tRNA (guanine-N(7)-)-methyltransferase">
    <location>
        <begin position="1"/>
        <end position="239"/>
    </location>
</feature>
<feature type="region of interest" description="Interaction with RNA" evidence="2">
    <location>
        <begin position="150"/>
        <end position="155"/>
    </location>
</feature>
<feature type="active site" evidence="1">
    <location>
        <position position="144"/>
    </location>
</feature>
<feature type="binding site" evidence="2">
    <location>
        <position position="69"/>
    </location>
    <ligand>
        <name>S-adenosyl-L-methionine</name>
        <dbReference type="ChEBI" id="CHEBI:59789"/>
    </ligand>
</feature>
<feature type="binding site" evidence="2">
    <location>
        <position position="94"/>
    </location>
    <ligand>
        <name>S-adenosyl-L-methionine</name>
        <dbReference type="ChEBI" id="CHEBI:59789"/>
    </ligand>
</feature>
<feature type="binding site" evidence="2">
    <location>
        <position position="121"/>
    </location>
    <ligand>
        <name>S-adenosyl-L-methionine</name>
        <dbReference type="ChEBI" id="CHEBI:59789"/>
    </ligand>
</feature>
<feature type="binding site" evidence="2">
    <location>
        <position position="144"/>
    </location>
    <ligand>
        <name>S-adenosyl-L-methionine</name>
        <dbReference type="ChEBI" id="CHEBI:59789"/>
    </ligand>
</feature>
<feature type="binding site" evidence="2">
    <location>
        <position position="148"/>
    </location>
    <ligand>
        <name>substrate</name>
    </ligand>
</feature>
<feature type="binding site" evidence="2">
    <location>
        <position position="180"/>
    </location>
    <ligand>
        <name>substrate</name>
    </ligand>
</feature>
<feature type="binding site" evidence="2">
    <location>
        <begin position="217"/>
        <end position="220"/>
    </location>
    <ligand>
        <name>substrate</name>
    </ligand>
</feature>
<name>TRMB_ECOHS</name>
<gene>
    <name evidence="2" type="primary">trmB</name>
    <name type="ordered locus">EcHS_A3121</name>
</gene>
<evidence type="ECO:0000250" key="1"/>
<evidence type="ECO:0000255" key="2">
    <source>
        <dbReference type="HAMAP-Rule" id="MF_01057"/>
    </source>
</evidence>
<reference key="1">
    <citation type="journal article" date="2008" name="J. Bacteriol.">
        <title>The pangenome structure of Escherichia coli: comparative genomic analysis of E. coli commensal and pathogenic isolates.</title>
        <authorList>
            <person name="Rasko D.A."/>
            <person name="Rosovitz M.J."/>
            <person name="Myers G.S.A."/>
            <person name="Mongodin E.F."/>
            <person name="Fricke W.F."/>
            <person name="Gajer P."/>
            <person name="Crabtree J."/>
            <person name="Sebaihia M."/>
            <person name="Thomson N.R."/>
            <person name="Chaudhuri R."/>
            <person name="Henderson I.R."/>
            <person name="Sperandio V."/>
            <person name="Ravel J."/>
        </authorList>
    </citation>
    <scope>NUCLEOTIDE SEQUENCE [LARGE SCALE GENOMIC DNA]</scope>
    <source>
        <strain>HS</strain>
    </source>
</reference>
<comment type="function">
    <text evidence="2">Catalyzes the formation of N(7)-methylguanine at position 46 (m7G46) in tRNA.</text>
</comment>
<comment type="catalytic activity">
    <reaction evidence="2">
        <text>guanosine(46) in tRNA + S-adenosyl-L-methionine = N(7)-methylguanosine(46) in tRNA + S-adenosyl-L-homocysteine</text>
        <dbReference type="Rhea" id="RHEA:42708"/>
        <dbReference type="Rhea" id="RHEA-COMP:10188"/>
        <dbReference type="Rhea" id="RHEA-COMP:10189"/>
        <dbReference type="ChEBI" id="CHEBI:57856"/>
        <dbReference type="ChEBI" id="CHEBI:59789"/>
        <dbReference type="ChEBI" id="CHEBI:74269"/>
        <dbReference type="ChEBI" id="CHEBI:74480"/>
        <dbReference type="EC" id="2.1.1.33"/>
    </reaction>
</comment>
<comment type="pathway">
    <text evidence="2">tRNA modification; N(7)-methylguanine-tRNA biosynthesis.</text>
</comment>
<comment type="subunit">
    <text evidence="2">Monomer.</text>
</comment>
<comment type="similarity">
    <text evidence="2">Belongs to the class I-like SAM-binding methyltransferase superfamily. TrmB family.</text>
</comment>
<keyword id="KW-0489">Methyltransferase</keyword>
<keyword id="KW-0949">S-adenosyl-L-methionine</keyword>
<keyword id="KW-0808">Transferase</keyword>
<keyword id="KW-0819">tRNA processing</keyword>
<accession>A8A4A3</accession>
<protein>
    <recommendedName>
        <fullName evidence="2">tRNA (guanine-N(7)-)-methyltransferase</fullName>
        <ecNumber evidence="2">2.1.1.33</ecNumber>
    </recommendedName>
    <alternativeName>
        <fullName evidence="2">tRNA (guanine(46)-N(7))-methyltransferase</fullName>
    </alternativeName>
    <alternativeName>
        <fullName evidence="2">tRNA(m7G46)-methyltransferase</fullName>
    </alternativeName>
</protein>
<proteinExistence type="inferred from homology"/>
<dbReference type="EC" id="2.1.1.33" evidence="2"/>
<dbReference type="EMBL" id="CP000802">
    <property type="protein sequence ID" value="ABV07357.1"/>
    <property type="molecule type" value="Genomic_DNA"/>
</dbReference>
<dbReference type="RefSeq" id="WP_000786911.1">
    <property type="nucleotide sequence ID" value="NC_009800.1"/>
</dbReference>
<dbReference type="SMR" id="A8A4A3"/>
<dbReference type="GeneID" id="93779031"/>
<dbReference type="KEGG" id="ecx:EcHS_A3121"/>
<dbReference type="HOGENOM" id="CLU_050910_0_1_6"/>
<dbReference type="UniPathway" id="UPA00989"/>
<dbReference type="GO" id="GO:0043527">
    <property type="term" value="C:tRNA methyltransferase complex"/>
    <property type="evidence" value="ECO:0007669"/>
    <property type="project" value="TreeGrafter"/>
</dbReference>
<dbReference type="GO" id="GO:0008176">
    <property type="term" value="F:tRNA (guanine(46)-N7)-methyltransferase activity"/>
    <property type="evidence" value="ECO:0007669"/>
    <property type="project" value="UniProtKB-UniRule"/>
</dbReference>
<dbReference type="FunFam" id="3.40.50.150:FF:000024">
    <property type="entry name" value="tRNA (guanine-N(7)-)-methyltransferase"/>
    <property type="match status" value="1"/>
</dbReference>
<dbReference type="Gene3D" id="3.40.50.150">
    <property type="entry name" value="Vaccinia Virus protein VP39"/>
    <property type="match status" value="1"/>
</dbReference>
<dbReference type="HAMAP" id="MF_01057">
    <property type="entry name" value="tRNA_methyltr_TrmB"/>
    <property type="match status" value="1"/>
</dbReference>
<dbReference type="InterPro" id="IPR029063">
    <property type="entry name" value="SAM-dependent_MTases_sf"/>
</dbReference>
<dbReference type="InterPro" id="IPR003358">
    <property type="entry name" value="tRNA_(Gua-N-7)_MeTrfase_Trmb"/>
</dbReference>
<dbReference type="InterPro" id="IPR055361">
    <property type="entry name" value="tRNA_methyltr_TrmB_bact"/>
</dbReference>
<dbReference type="NCBIfam" id="TIGR00091">
    <property type="entry name" value="tRNA (guanosine(46)-N7)-methyltransferase TrmB"/>
    <property type="match status" value="1"/>
</dbReference>
<dbReference type="PANTHER" id="PTHR23417">
    <property type="entry name" value="3-DEOXY-D-MANNO-OCTULOSONIC-ACID TRANSFERASE/TRNA GUANINE-N 7 - -METHYLTRANSFERASE"/>
    <property type="match status" value="1"/>
</dbReference>
<dbReference type="PANTHER" id="PTHR23417:SF14">
    <property type="entry name" value="PENTACOTRIPEPTIDE-REPEAT REGION OF PRORP DOMAIN-CONTAINING PROTEIN"/>
    <property type="match status" value="1"/>
</dbReference>
<dbReference type="Pfam" id="PF02390">
    <property type="entry name" value="Methyltransf_4"/>
    <property type="match status" value="1"/>
</dbReference>
<dbReference type="SUPFAM" id="SSF53335">
    <property type="entry name" value="S-adenosyl-L-methionine-dependent methyltransferases"/>
    <property type="match status" value="1"/>
</dbReference>
<dbReference type="PROSITE" id="PS51625">
    <property type="entry name" value="SAM_MT_TRMB"/>
    <property type="match status" value="1"/>
</dbReference>